<dbReference type="EC" id="2.7.11.1" evidence="4"/>
<dbReference type="EMBL" id="AJ245456">
    <property type="protein sequence ID" value="CAB61344.1"/>
    <property type="molecule type" value="Genomic_DNA"/>
</dbReference>
<dbReference type="CCDS" id="CCDS49952.1"/>
<dbReference type="RefSeq" id="NP_001161385.1">
    <property type="nucleotide sequence ID" value="NM_001167913.2"/>
</dbReference>
<dbReference type="SMR" id="Q9QYZ3"/>
<dbReference type="FunCoup" id="Q9QYZ3">
    <property type="interactions" value="127"/>
</dbReference>
<dbReference type="STRING" id="10090.ENSMUSP00000124967"/>
<dbReference type="GlyGen" id="Q9QYZ3">
    <property type="glycosylation" value="1 site, 1 O-linked glycan (1 site)"/>
</dbReference>
<dbReference type="iPTMnet" id="Q9QYZ3"/>
<dbReference type="PaxDb" id="10090-ENSMUSP00000124967"/>
<dbReference type="DNASU" id="236574"/>
<dbReference type="Ensembl" id="ENSMUST00000059824.7">
    <property type="protein sequence ID" value="ENSMUSP00000061516.7"/>
    <property type="gene ID" value="ENSMUSG00000073457.5"/>
</dbReference>
<dbReference type="Ensembl" id="ENSMUST00000162940.3">
    <property type="protein sequence ID" value="ENSMUSP00000124967.2"/>
    <property type="gene ID" value="ENSMUSG00000073457.5"/>
</dbReference>
<dbReference type="GeneID" id="236574"/>
<dbReference type="KEGG" id="mmu:236574"/>
<dbReference type="UCSC" id="uc012akm.2">
    <property type="organism name" value="mouse"/>
</dbReference>
<dbReference type="AGR" id="MGI:3037705"/>
<dbReference type="CTD" id="236574"/>
<dbReference type="MGI" id="MGI:3037705">
    <property type="gene designation" value="Smok2b"/>
</dbReference>
<dbReference type="VEuPathDB" id="HostDB:ENSMUSG00000073457"/>
<dbReference type="eggNOG" id="KOG0586">
    <property type="taxonomic scope" value="Eukaryota"/>
</dbReference>
<dbReference type="GeneTree" id="ENSGT00940000160886"/>
<dbReference type="HOGENOM" id="CLU_000288_157_7_1"/>
<dbReference type="InParanoid" id="Q9QYZ3"/>
<dbReference type="OMA" id="ARRIFWQ"/>
<dbReference type="OrthoDB" id="91390at9989"/>
<dbReference type="PhylomeDB" id="Q9QYZ3"/>
<dbReference type="TreeFam" id="TF338820"/>
<dbReference type="BioGRID-ORCS" id="236574">
    <property type="hits" value="1 hit in 77 CRISPR screens"/>
</dbReference>
<dbReference type="PRO" id="PR:Q9QYZ3"/>
<dbReference type="Proteomes" id="UP000000589">
    <property type="component" value="Chromosome 17"/>
</dbReference>
<dbReference type="RNAct" id="Q9QYZ3">
    <property type="molecule type" value="protein"/>
</dbReference>
<dbReference type="Bgee" id="ENSMUSG00000073457">
    <property type="expression patterns" value="Expressed in testis and 7 other cell types or tissues"/>
</dbReference>
<dbReference type="GO" id="GO:0005524">
    <property type="term" value="F:ATP binding"/>
    <property type="evidence" value="ECO:0007669"/>
    <property type="project" value="UniProtKB-KW"/>
</dbReference>
<dbReference type="GO" id="GO:0004672">
    <property type="term" value="F:protein kinase activity"/>
    <property type="evidence" value="ECO:0000314"/>
    <property type="project" value="MGI"/>
</dbReference>
<dbReference type="GO" id="GO:0106310">
    <property type="term" value="F:protein serine kinase activity"/>
    <property type="evidence" value="ECO:0007669"/>
    <property type="project" value="RHEA"/>
</dbReference>
<dbReference type="GO" id="GO:0004674">
    <property type="term" value="F:protein serine/threonine kinase activity"/>
    <property type="evidence" value="ECO:0007669"/>
    <property type="project" value="UniProtKB-KW"/>
</dbReference>
<dbReference type="CDD" id="cd14003">
    <property type="entry name" value="STKc_AMPK-like"/>
    <property type="match status" value="1"/>
</dbReference>
<dbReference type="CDD" id="cd14337">
    <property type="entry name" value="UBA_MARK_Par1"/>
    <property type="match status" value="1"/>
</dbReference>
<dbReference type="FunFam" id="1.10.510.10:FF:000592">
    <property type="entry name" value="CAMK family protein kinase"/>
    <property type="match status" value="1"/>
</dbReference>
<dbReference type="FunFam" id="1.10.8.10:FF:000005">
    <property type="entry name" value="Non-specific serine/threonine protein kinase"/>
    <property type="match status" value="1"/>
</dbReference>
<dbReference type="FunFam" id="3.30.200.20:FF:000003">
    <property type="entry name" value="Non-specific serine/threonine protein kinase"/>
    <property type="match status" value="1"/>
</dbReference>
<dbReference type="Gene3D" id="1.10.8.10">
    <property type="entry name" value="DNA helicase RuvA subunit, C-terminal domain"/>
    <property type="match status" value="1"/>
</dbReference>
<dbReference type="Gene3D" id="3.30.200.20">
    <property type="entry name" value="Phosphorylase Kinase, domain 1"/>
    <property type="match status" value="1"/>
</dbReference>
<dbReference type="Gene3D" id="1.10.510.10">
    <property type="entry name" value="Transferase(Phosphotransferase) domain 1"/>
    <property type="match status" value="1"/>
</dbReference>
<dbReference type="InterPro" id="IPR011009">
    <property type="entry name" value="Kinase-like_dom_sf"/>
</dbReference>
<dbReference type="InterPro" id="IPR000719">
    <property type="entry name" value="Prot_kinase_dom"/>
</dbReference>
<dbReference type="InterPro" id="IPR008271">
    <property type="entry name" value="Ser/Thr_kinase_AS"/>
</dbReference>
<dbReference type="PANTHER" id="PTHR24346">
    <property type="entry name" value="MAP/MICROTUBULE AFFINITY-REGULATING KINASE"/>
    <property type="match status" value="1"/>
</dbReference>
<dbReference type="PANTHER" id="PTHR24346:SF95">
    <property type="entry name" value="SPERM MOTILITY KINASE 3A"/>
    <property type="match status" value="1"/>
</dbReference>
<dbReference type="Pfam" id="PF00069">
    <property type="entry name" value="Pkinase"/>
    <property type="match status" value="1"/>
</dbReference>
<dbReference type="SMART" id="SM00220">
    <property type="entry name" value="S_TKc"/>
    <property type="match status" value="1"/>
</dbReference>
<dbReference type="SUPFAM" id="SSF56112">
    <property type="entry name" value="Protein kinase-like (PK-like)"/>
    <property type="match status" value="1"/>
</dbReference>
<dbReference type="PROSITE" id="PS50011">
    <property type="entry name" value="PROTEIN_KINASE_DOM"/>
    <property type="match status" value="1"/>
</dbReference>
<dbReference type="PROSITE" id="PS00108">
    <property type="entry name" value="PROTEIN_KINASE_ST"/>
    <property type="match status" value="1"/>
</dbReference>
<evidence type="ECO:0000255" key="1">
    <source>
        <dbReference type="PROSITE-ProRule" id="PRU00159"/>
    </source>
</evidence>
<evidence type="ECO:0000255" key="2">
    <source>
        <dbReference type="PROSITE-ProRule" id="PRU10027"/>
    </source>
</evidence>
<evidence type="ECO:0000256" key="3">
    <source>
        <dbReference type="SAM" id="MobiDB-lite"/>
    </source>
</evidence>
<evidence type="ECO:0000269" key="4">
    <source>
    </source>
</evidence>
<evidence type="ECO:0000305" key="5"/>
<evidence type="ECO:0000312" key="6">
    <source>
        <dbReference type="MGI" id="MGI:3037705"/>
    </source>
</evidence>
<name>SMK2B_MOUSE</name>
<comment type="function">
    <text evidence="4">May play a role in sperm motility, especially in the regulation of flagellar function.</text>
</comment>
<comment type="catalytic activity">
    <reaction evidence="4">
        <text>L-seryl-[protein] + ATP = O-phospho-L-seryl-[protein] + ADP + H(+)</text>
        <dbReference type="Rhea" id="RHEA:17989"/>
        <dbReference type="Rhea" id="RHEA-COMP:9863"/>
        <dbReference type="Rhea" id="RHEA-COMP:11604"/>
        <dbReference type="ChEBI" id="CHEBI:15378"/>
        <dbReference type="ChEBI" id="CHEBI:29999"/>
        <dbReference type="ChEBI" id="CHEBI:30616"/>
        <dbReference type="ChEBI" id="CHEBI:83421"/>
        <dbReference type="ChEBI" id="CHEBI:456216"/>
        <dbReference type="EC" id="2.7.11.1"/>
    </reaction>
</comment>
<comment type="catalytic activity">
    <reaction evidence="4">
        <text>L-threonyl-[protein] + ATP = O-phospho-L-threonyl-[protein] + ADP + H(+)</text>
        <dbReference type="Rhea" id="RHEA:46608"/>
        <dbReference type="Rhea" id="RHEA-COMP:11060"/>
        <dbReference type="Rhea" id="RHEA-COMP:11605"/>
        <dbReference type="ChEBI" id="CHEBI:15378"/>
        <dbReference type="ChEBI" id="CHEBI:30013"/>
        <dbReference type="ChEBI" id="CHEBI:30616"/>
        <dbReference type="ChEBI" id="CHEBI:61977"/>
        <dbReference type="ChEBI" id="CHEBI:456216"/>
        <dbReference type="EC" id="2.7.11.1"/>
    </reaction>
</comment>
<comment type="tissue specificity">
    <text evidence="4">Testis-specific. Expressed in the testis from 22 days postpartum (22 dpp).</text>
</comment>
<comment type="miscellaneous">
    <text>Encoded on the T-complex, a region of 20-30 Mb on proximal third of mouse chromosome 17. Naturally occurring variant forms of the T-complex, known as complete t-haplotypes, are found in wild mouse populations. The t-haplotypes contain at least four nonoverlapping inversions that suppress recombination with the wild-type chromosome, and lock into strong linkage disequilibrium loci affecting normal transmission of the chromosome, male gametogenesis and embryonic development.</text>
</comment>
<comment type="similarity">
    <text evidence="5">Belongs to the protein kinase superfamily. CAMK Ser/Thr protein kinase family. Smok subfamily.</text>
</comment>
<reference key="1">
    <citation type="journal article" date="1999" name="Nature">
        <title>A protein kinase encoded by the t complex responder gene causes non-Mendelian inheritance.</title>
        <authorList>
            <person name="Herrmann B.G."/>
            <person name="Koschorz B."/>
            <person name="Wertz K."/>
            <person name="McLaughlin K.J."/>
            <person name="Kispert A."/>
        </authorList>
    </citation>
    <scope>NUCLEOTIDE SEQUENCE [GENOMIC DNA]</scope>
    <scope>FUNCTION</scope>
    <scope>CATALYTIC ACTIVITY</scope>
    <scope>TISSUE SPECIFICITY</scope>
    <source>
        <strain>129/Sv</strain>
        <tissue>Testis</tissue>
    </source>
</reference>
<feature type="chain" id="PRO_0000307868" description="Sperm motility kinase 2B">
    <location>
        <begin position="1"/>
        <end position="484"/>
    </location>
</feature>
<feature type="domain" description="Protein kinase" evidence="1">
    <location>
        <begin position="8"/>
        <end position="256"/>
    </location>
</feature>
<feature type="domain" description="UBA">
    <location>
        <begin position="272"/>
        <end position="314"/>
    </location>
</feature>
<feature type="region of interest" description="Disordered" evidence="3">
    <location>
        <begin position="356"/>
        <end position="400"/>
    </location>
</feature>
<feature type="region of interest" description="Disordered" evidence="3">
    <location>
        <begin position="422"/>
        <end position="450"/>
    </location>
</feature>
<feature type="compositionally biased region" description="Polar residues" evidence="3">
    <location>
        <begin position="356"/>
        <end position="373"/>
    </location>
</feature>
<feature type="compositionally biased region" description="Polar residues" evidence="3">
    <location>
        <begin position="422"/>
        <end position="434"/>
    </location>
</feature>
<feature type="active site" description="Proton acceptor" evidence="1 2">
    <location>
        <position position="127"/>
    </location>
</feature>
<feature type="binding site" evidence="1">
    <location>
        <begin position="14"/>
        <end position="22"/>
    </location>
    <ligand>
        <name>ATP</name>
        <dbReference type="ChEBI" id="CHEBI:30616"/>
    </ligand>
</feature>
<feature type="binding site" evidence="1">
    <location>
        <position position="37"/>
    </location>
    <ligand>
        <name>ATP</name>
        <dbReference type="ChEBI" id="CHEBI:30616"/>
    </ligand>
</feature>
<organism>
    <name type="scientific">Mus musculus</name>
    <name type="common">Mouse</name>
    <dbReference type="NCBI Taxonomy" id="10090"/>
    <lineage>
        <taxon>Eukaryota</taxon>
        <taxon>Metazoa</taxon>
        <taxon>Chordata</taxon>
        <taxon>Craniata</taxon>
        <taxon>Vertebrata</taxon>
        <taxon>Euteleostomi</taxon>
        <taxon>Mammalia</taxon>
        <taxon>Eutheria</taxon>
        <taxon>Euarchontoglires</taxon>
        <taxon>Glires</taxon>
        <taxon>Rodentia</taxon>
        <taxon>Myomorpha</taxon>
        <taxon>Muroidea</taxon>
        <taxon>Muridae</taxon>
        <taxon>Murinae</taxon>
        <taxon>Mus</taxon>
        <taxon>Mus</taxon>
    </lineage>
</organism>
<gene>
    <name evidence="6" type="primary">Smok2b</name>
    <name type="synonym">Gm1847</name>
</gene>
<keyword id="KW-0067">ATP-binding</keyword>
<keyword id="KW-0418">Kinase</keyword>
<keyword id="KW-0547">Nucleotide-binding</keyword>
<keyword id="KW-1185">Reference proteome</keyword>
<keyword id="KW-0723">Serine/threonine-protein kinase</keyword>
<keyword id="KW-0808">Transferase</keyword>
<proteinExistence type="evidence at protein level"/>
<protein>
    <recommendedName>
        <fullName evidence="6">Sperm motility kinase 2B</fullName>
        <ecNumber evidence="4">2.7.11.1</ecNumber>
    </recommendedName>
</protein>
<accession>Q9QYZ3</accession>
<sequence length="484" mass="54698">MENFHAQYVMLETIGHGGCSKVMLARHRLTGSHVAVKMIRKSECWCNPVMSEVELLMMADHPNIISLLQVIETKKKVYLIMELCEGKSLYQHIRNAGYLQEDEARALFKQLLSAMNYCHNQGIVHRDLKPDNIMVEKDGKVKIIDFGLGTQVKPGQKLNLFCGTYPFSAPEVLLSRPYDGPKIDVWTLGVVLYFMVTGKVPFDAASIQKLVRQILAGKYFVPSRLSVELRDLISLLMTANPKLRPTVAEVMVHPWVTEGSGVFPDPCEEQMPLKPNPAIVKAMGYIGFQAQDIEDSLRQRKFNETMASYCLLKKQILKECDRPIRAQPMNPSVTPFPSLVDTSTFHLGLRRRETEPTSLRLSANRQMSVCGRSTSKKRDRRFSWPSVSGRPLHTTHTMDHTHTRTRSVPCIYSMFCTIQPNSSDDSTEGHTSASAEDKPVRSRGWPRGIKGWTRKIGNVMRKLCCCIPSKETSHVGHSRVSPKK</sequence>